<evidence type="ECO:0000250" key="1"/>
<evidence type="ECO:0000250" key="2">
    <source>
        <dbReference type="UniProtKB" id="P27699"/>
    </source>
</evidence>
<evidence type="ECO:0000250" key="3">
    <source>
        <dbReference type="UniProtKB" id="Q01147"/>
    </source>
</evidence>
<evidence type="ECO:0000250" key="4">
    <source>
        <dbReference type="UniProtKB" id="Q03060"/>
    </source>
</evidence>
<evidence type="ECO:0000255" key="5">
    <source>
        <dbReference type="PROSITE-ProRule" id="PRU00312"/>
    </source>
</evidence>
<evidence type="ECO:0000255" key="6">
    <source>
        <dbReference type="PROSITE-ProRule" id="PRU00978"/>
    </source>
</evidence>
<evidence type="ECO:0000256" key="7">
    <source>
        <dbReference type="SAM" id="MobiDB-lite"/>
    </source>
</evidence>
<evidence type="ECO:0000303" key="8">
    <source ref="1"/>
</evidence>
<evidence type="ECO:0000305" key="9"/>
<gene>
    <name type="primary">CREM</name>
</gene>
<keyword id="KW-0010">Activator</keyword>
<keyword id="KW-0877">Alternative promoter usage</keyword>
<keyword id="KW-0238">DNA-binding</keyword>
<keyword id="KW-0539">Nucleus</keyword>
<keyword id="KW-0597">Phosphoprotein</keyword>
<keyword id="KW-1185">Reference proteome</keyword>
<keyword id="KW-0678">Repressor</keyword>
<keyword id="KW-0804">Transcription</keyword>
<keyword id="KW-0805">Transcription regulation</keyword>
<protein>
    <recommendedName>
        <fullName>cAMP-responsive element modulator</fullName>
    </recommendedName>
</protein>
<organism>
    <name type="scientific">Bos taurus</name>
    <name type="common">Bovine</name>
    <dbReference type="NCBI Taxonomy" id="9913"/>
    <lineage>
        <taxon>Eukaryota</taxon>
        <taxon>Metazoa</taxon>
        <taxon>Chordata</taxon>
        <taxon>Craniata</taxon>
        <taxon>Vertebrata</taxon>
        <taxon>Euteleostomi</taxon>
        <taxon>Mammalia</taxon>
        <taxon>Eutheria</taxon>
        <taxon>Laurasiatheria</taxon>
        <taxon>Artiodactyla</taxon>
        <taxon>Ruminantia</taxon>
        <taxon>Pecora</taxon>
        <taxon>Bovidae</taxon>
        <taxon>Bovinae</taxon>
        <taxon>Bos</taxon>
    </lineage>
</organism>
<name>CREM_BOVIN</name>
<sequence length="360" mass="38694">MSKCGRKKYMKTNLRQMTMETIDSQQDGSLPDSVAESESAHMQTQTGQNSIPTLAQVSVAGSSTGRGSPAVTLVQLPSGQTVHVQGVIQTPQPSVIQSPQIQTVQVATIAETDESAESEGVIDSHKRREILSRRPSYRKILNELSSDVPGVPKIEEEKSEEEGTPPNIAAMAVPTSIYQTSTGQYIAIAQGGTIQISNPGSDGVQGLQALTMTNSGAPPPGATIVQYAAQSADGTQQFFVPGSQVVVQDEETELAPSHMAAATGDMPTYQIRAPTTALPQGVVMAASPGSLHSPQQLAEEATRKRELRLMKNREAAKECRRRKKEYVKCLESRVAVLEVQNKKLIEELETLKDICSPKTD</sequence>
<accession>Q1LZH5</accession>
<accession>Q3SZW5</accession>
<feature type="chain" id="PRO_0000286357" description="cAMP-responsive element modulator">
    <location>
        <begin position="1"/>
        <end position="360"/>
    </location>
</feature>
<feature type="domain" description="KID" evidence="5">
    <location>
        <begin position="104"/>
        <end position="163"/>
    </location>
</feature>
<feature type="domain" description="bZIP" evidence="6">
    <location>
        <begin position="302"/>
        <end position="360"/>
    </location>
</feature>
<feature type="region of interest" description="Disordered" evidence="7">
    <location>
        <begin position="19"/>
        <end position="52"/>
    </location>
</feature>
<feature type="region of interest" description="Basic motif" evidence="6">
    <location>
        <begin position="303"/>
        <end position="328"/>
    </location>
</feature>
<feature type="region of interest" description="Leucine-zipper" evidence="6">
    <location>
        <begin position="330"/>
        <end position="351"/>
    </location>
</feature>
<feature type="compositionally biased region" description="Polar residues" evidence="7">
    <location>
        <begin position="19"/>
        <end position="28"/>
    </location>
</feature>
<feature type="compositionally biased region" description="Polar residues" evidence="7">
    <location>
        <begin position="40"/>
        <end position="52"/>
    </location>
</feature>
<feature type="modified residue" description="Phosphoserine" evidence="2">
    <location>
        <position position="118"/>
    </location>
</feature>
<feature type="modified residue" description="Phosphoserine" evidence="4">
    <location>
        <position position="145"/>
    </location>
</feature>
<feature type="modified residue" description="Phosphoserine" evidence="4 5">
    <location>
        <position position="287"/>
    </location>
</feature>
<feature type="modified residue" description="Phosphoserine" evidence="4 5">
    <location>
        <position position="290"/>
    </location>
</feature>
<feature type="modified residue" description="Phosphoserine" evidence="4 5">
    <location>
        <position position="293"/>
    </location>
</feature>
<feature type="splice variant" id="VSP_025033" description="In isoform 2." evidence="8">
    <location>
        <begin position="1"/>
        <end position="55"/>
    </location>
</feature>
<feature type="splice variant" id="VSP_025034" description="In isoform 2." evidence="8">
    <original>Q</original>
    <variation>M</variation>
    <location>
        <position position="56"/>
    </location>
</feature>
<feature type="sequence conflict" description="In Ref. 1; AAI02678." evidence="9" ref="1">
    <original>D</original>
    <variation>G</variation>
    <location>
        <position position="249"/>
    </location>
</feature>
<dbReference type="EMBL" id="BC102677">
    <property type="protein sequence ID" value="AAI02678.1"/>
    <property type="molecule type" value="mRNA"/>
</dbReference>
<dbReference type="EMBL" id="BC115995">
    <property type="protein sequence ID" value="AAI15996.1"/>
    <property type="molecule type" value="mRNA"/>
</dbReference>
<dbReference type="RefSeq" id="NP_001029882.2">
    <molecule id="Q1LZH5-1"/>
    <property type="nucleotide sequence ID" value="NM_001034710.3"/>
</dbReference>
<dbReference type="RefSeq" id="XP_005214310.1">
    <molecule id="Q1LZH5-2"/>
    <property type="nucleotide sequence ID" value="XM_005214253.5"/>
</dbReference>
<dbReference type="SMR" id="Q1LZH5"/>
<dbReference type="FunCoup" id="Q1LZH5">
    <property type="interactions" value="1423"/>
</dbReference>
<dbReference type="STRING" id="9913.ENSBTAP00000074190"/>
<dbReference type="PaxDb" id="9913-ENSBTAP00000021381"/>
<dbReference type="GeneID" id="540605"/>
<dbReference type="KEGG" id="bta:540605"/>
<dbReference type="CTD" id="1390"/>
<dbReference type="VEuPathDB" id="HostDB:ENSBTAG00000016060"/>
<dbReference type="eggNOG" id="KOG3584">
    <property type="taxonomic scope" value="Eukaryota"/>
</dbReference>
<dbReference type="HOGENOM" id="CLU_042675_0_1_1"/>
<dbReference type="InParanoid" id="Q1LZH5"/>
<dbReference type="OMA" id="HEKTTER"/>
<dbReference type="OrthoDB" id="5970722at2759"/>
<dbReference type="TreeFam" id="TF106464"/>
<dbReference type="Proteomes" id="UP000009136">
    <property type="component" value="Chromosome 13"/>
</dbReference>
<dbReference type="Bgee" id="ENSBTAG00000016060">
    <property type="expression patterns" value="Expressed in spermatid and 106 other cell types or tissues"/>
</dbReference>
<dbReference type="GO" id="GO:1990589">
    <property type="term" value="C:ATF4-CREB1 transcription factor complex"/>
    <property type="evidence" value="ECO:0000318"/>
    <property type="project" value="GO_Central"/>
</dbReference>
<dbReference type="GO" id="GO:0000981">
    <property type="term" value="F:DNA-binding transcription factor activity, RNA polymerase II-specific"/>
    <property type="evidence" value="ECO:0000318"/>
    <property type="project" value="GO_Central"/>
</dbReference>
<dbReference type="GO" id="GO:0000978">
    <property type="term" value="F:RNA polymerase II cis-regulatory region sequence-specific DNA binding"/>
    <property type="evidence" value="ECO:0000318"/>
    <property type="project" value="GO_Central"/>
</dbReference>
<dbReference type="GO" id="GO:0006357">
    <property type="term" value="P:regulation of transcription by RNA polymerase II"/>
    <property type="evidence" value="ECO:0000318"/>
    <property type="project" value="GO_Central"/>
</dbReference>
<dbReference type="CDD" id="cd14690">
    <property type="entry name" value="bZIP_CREB1"/>
    <property type="match status" value="1"/>
</dbReference>
<dbReference type="FunFam" id="1.20.5.170:FF:000003">
    <property type="entry name" value="cAMP-responsive element modulator isoform X2"/>
    <property type="match status" value="1"/>
</dbReference>
<dbReference type="Gene3D" id="1.20.5.170">
    <property type="match status" value="1"/>
</dbReference>
<dbReference type="InterPro" id="IPR004827">
    <property type="entry name" value="bZIP"/>
</dbReference>
<dbReference type="InterPro" id="IPR046347">
    <property type="entry name" value="bZIP_sf"/>
</dbReference>
<dbReference type="InterPro" id="IPR003102">
    <property type="entry name" value="CREB1-like_pKID"/>
</dbReference>
<dbReference type="InterPro" id="IPR001630">
    <property type="entry name" value="Leuzip_CREB"/>
</dbReference>
<dbReference type="PANTHER" id="PTHR45879:SF4">
    <property type="entry name" value="CAMP-RESPONSIVE ELEMENT MODULATOR"/>
    <property type="match status" value="1"/>
</dbReference>
<dbReference type="PANTHER" id="PTHR45879">
    <property type="entry name" value="CYCLIC AMP RESPONSE ELEMENT-BINDING PROTEIN B"/>
    <property type="match status" value="1"/>
</dbReference>
<dbReference type="Pfam" id="PF00170">
    <property type="entry name" value="bZIP_1"/>
    <property type="match status" value="1"/>
</dbReference>
<dbReference type="Pfam" id="PF02173">
    <property type="entry name" value="pKID"/>
    <property type="match status" value="1"/>
</dbReference>
<dbReference type="PRINTS" id="PR00041">
    <property type="entry name" value="LEUZIPPRCREB"/>
</dbReference>
<dbReference type="SMART" id="SM00338">
    <property type="entry name" value="BRLZ"/>
    <property type="match status" value="1"/>
</dbReference>
<dbReference type="SUPFAM" id="SSF57959">
    <property type="entry name" value="Leucine zipper domain"/>
    <property type="match status" value="1"/>
</dbReference>
<dbReference type="PROSITE" id="PS50217">
    <property type="entry name" value="BZIP"/>
    <property type="match status" value="1"/>
</dbReference>
<dbReference type="PROSITE" id="PS00036">
    <property type="entry name" value="BZIP_BASIC"/>
    <property type="match status" value="1"/>
</dbReference>
<dbReference type="PROSITE" id="PS50953">
    <property type="entry name" value="KID"/>
    <property type="match status" value="1"/>
</dbReference>
<proteinExistence type="evidence at transcript level"/>
<comment type="function">
    <text evidence="1">Transcriptional regulator that binds the cAMP response element (CRE), a sequence present in many viral and cellular promoters. Isoforms are either transcriptional activators or repressors. Isoform 1 and isoform 2 are transcriptional activators. Plays a role in spermatogenesis and is involved in spermatid maturation (By similarity).</text>
</comment>
<comment type="subunit">
    <text evidence="2 4">Binds DNA as a dimer. Interacts with FHL5. Interacts with CDC34. May interact with TSSK4.</text>
</comment>
<comment type="subcellular location">
    <subcellularLocation>
        <location evidence="5 6">Nucleus</location>
    </subcellularLocation>
</comment>
<comment type="alternative products">
    <event type="alternative promoter"/>
    <isoform>
        <id>Q1LZH5-1</id>
        <name>1</name>
        <sequence type="displayed"/>
    </isoform>
    <isoform>
        <id>Q1LZH5-2</id>
        <name>2</name>
        <sequence type="described" ref="VSP_025033 VSP_025034"/>
    </isoform>
    <text>Additional isoforms seem to exist.</text>
</comment>
<comment type="PTM">
    <text evidence="2 3">Stimulated by phosphorylation. Phosphorylated on Ser-118 by TSSK4 in vitro.</text>
</comment>
<comment type="miscellaneous">
    <molecule>Isoform 1</molecule>
    <text>Produced by alternative promoter usage. Activator.</text>
</comment>
<comment type="miscellaneous">
    <molecule>Isoform 2</molecule>
    <text evidence="9">Produced by alternative promoter usage. Activator.</text>
</comment>
<comment type="similarity">
    <text evidence="9">Belongs to the bZIP family.</text>
</comment>
<reference key="1">
    <citation type="submission" date="2006-05" db="EMBL/GenBank/DDBJ databases">
        <authorList>
            <consortium name="NIH - Mammalian Gene Collection (MGC) project"/>
        </authorList>
    </citation>
    <scope>NUCLEOTIDE SEQUENCE [LARGE SCALE MRNA] (ISOFORMS 1 AND 2)</scope>
    <source>
        <strain>Crossbred X Angus</strain>
        <strain>Hereford</strain>
        <tissue>Liver</tissue>
        <tissue>Testis</tissue>
    </source>
</reference>